<comment type="function">
    <text evidence="1 6">Involved in the biosynthesis of rhabduscin, a tyrosine derivative which is a potent inhibitor of phenoloxidase, a key component of the insect's innate immune system (PubMed:22711807). Responsible for the synthesis of the isonitrile group on tyrosine using the C2 of ribulose 5-phosphate as the source of the carbon atom (Probable).</text>
</comment>
<comment type="catalytic activity">
    <reaction evidence="5 6">
        <text>D-ribulose 5-phosphate + L-tyrosine = (2S)-3-(4-hydroxyphenyl)-2-isocyanopropanoate + hydroxyacetone + formaldehyde + phosphate + H2O + H(+)</text>
        <dbReference type="Rhea" id="RHEA:45732"/>
        <dbReference type="ChEBI" id="CHEBI:15377"/>
        <dbReference type="ChEBI" id="CHEBI:15378"/>
        <dbReference type="ChEBI" id="CHEBI:16842"/>
        <dbReference type="ChEBI" id="CHEBI:27957"/>
        <dbReference type="ChEBI" id="CHEBI:43474"/>
        <dbReference type="ChEBI" id="CHEBI:58121"/>
        <dbReference type="ChEBI" id="CHEBI:58315"/>
        <dbReference type="ChEBI" id="CHEBI:140647"/>
        <dbReference type="EC" id="4.1.99.24"/>
    </reaction>
    <physiologicalReaction direction="left-to-right" evidence="5 6">
        <dbReference type="Rhea" id="RHEA:45733"/>
    </physiologicalReaction>
</comment>
<comment type="disruption phenotype">
    <text evidence="1">Deletion of isnA and isnB abolishes rhabduscin biosynthesis and decreases virulence of the strain.</text>
</comment>
<comment type="similarity">
    <text evidence="4">Belongs to the isocyanide synthase family.</text>
</comment>
<reference key="1">
    <citation type="journal article" date="2011" name="PLoS ONE">
        <title>The entomopathogenic bacterial endosymbionts xenorhabdus and photorhabdus: convergent lifestyles from divergent genomes.</title>
        <authorList>
            <person name="Chaston J.M."/>
            <person name="Suen G."/>
            <person name="Tucker S.L."/>
            <person name="Andersen A.W."/>
            <person name="Bhasin A."/>
            <person name="Bode E."/>
            <person name="Bode H.B."/>
            <person name="Brachmann A.O."/>
            <person name="Cowles C.E."/>
            <person name="Cowles K.N."/>
            <person name="Darby C."/>
            <person name="de Leon L."/>
            <person name="Drace K."/>
            <person name="Du Z."/>
            <person name="Givaudan A."/>
            <person name="Herbert Tran E.E."/>
            <person name="Jewell K.A."/>
            <person name="Knack J.J."/>
            <person name="Krasomil-Osterfeld K.C."/>
            <person name="Kukor R."/>
            <person name="Lanois A."/>
            <person name="Latreille P."/>
            <person name="Leimgruber N.K."/>
            <person name="Lipke C.M."/>
            <person name="Liu R."/>
            <person name="Lu X."/>
            <person name="Martens E.C."/>
            <person name="Marri P.R."/>
            <person name="Medigue C."/>
            <person name="Menard M.L."/>
            <person name="Miller N.M."/>
            <person name="Morales-Soto N."/>
            <person name="Norton S."/>
            <person name="Ogier J.C."/>
            <person name="Orchard S.S."/>
            <person name="Park D."/>
            <person name="Park Y."/>
            <person name="Qurollo B.A."/>
            <person name="Sugar D.R."/>
            <person name="Richards G.R."/>
            <person name="Rouy Z."/>
            <person name="Slominski B."/>
            <person name="Slominski K."/>
            <person name="Snyder H."/>
            <person name="Tjaden B.C."/>
            <person name="van der Hoeven R."/>
            <person name="Welch R.D."/>
            <person name="Wheeler C."/>
            <person name="Xiang B."/>
            <person name="Barbazuk B."/>
            <person name="Gaudriault S."/>
            <person name="Goodner B."/>
            <person name="Slater S.C."/>
            <person name="Forst S."/>
            <person name="Goldman B.S."/>
            <person name="Goodrich-Blair H."/>
        </authorList>
    </citation>
    <scope>NUCLEOTIDE SEQUENCE [LARGE SCALE GENOMIC DNA]</scope>
    <source>
        <strain>ATCC 19061 / DSM 3370 / CCUG 14189 / LMG 1036 / NCIMB 9965 / AN6</strain>
    </source>
</reference>
<reference key="2">
    <citation type="journal article" date="2012" name="Proc. Natl. Acad. Sci. U.S.A.">
        <title>Small molecule perimeter defense in entomopathogenic bacteria.</title>
        <authorList>
            <person name="Crawford J.M."/>
            <person name="Portmann C."/>
            <person name="Zhang X."/>
            <person name="Roeffaers M.B."/>
            <person name="Clardy J."/>
        </authorList>
    </citation>
    <scope>FUNCTION</scope>
    <scope>DISRUPTION PHENOTYPE</scope>
    <source>
        <strain>ATCC 19061 / DSM 3370 / CCUG 14189 / LMG 1036 / NCIMB 9965 / AN6</strain>
    </source>
</reference>
<reference key="3">
    <citation type="journal article" date="2017" name="Org. Lett.">
        <title>In vitro stepwise reconstitution of amino acid derived vinyl isocyanide biosynthesis: detection of an elusive intermediate.</title>
        <authorList>
            <person name="Chang W.C."/>
            <person name="Sanyal D."/>
            <person name="Huang J.L."/>
            <person name="Ittiamornkul K."/>
            <person name="Zhu Q."/>
            <person name="Liu X."/>
        </authorList>
    </citation>
    <scope>FUNCTION</scope>
</reference>
<proteinExistence type="inferred from homology"/>
<keyword id="KW-0456">Lyase</keyword>
<keyword id="KW-1185">Reference proteome</keyword>
<name>PVCA_XENNA</name>
<protein>
    <recommendedName>
        <fullName evidence="4">L-tyrosine isonitrile synthase</fullName>
        <ecNumber evidence="5 6">4.1.99.24</ecNumber>
    </recommendedName>
    <alternativeName>
        <fullName evidence="4">Rhabduscin biosynthesis protein PvcA</fullName>
    </alternativeName>
</protein>
<gene>
    <name evidence="3" type="primary">pvcA</name>
    <name evidence="2" type="synonym">isnA</name>
    <name evidence="7" type="ordered locus">XNC1_1221</name>
</gene>
<accession>D3V9Q4</accession>
<feature type="chain" id="PRO_0000453967" description="L-tyrosine isonitrile synthase">
    <location>
        <begin position="1"/>
        <end position="335"/>
    </location>
</feature>
<organism>
    <name type="scientific">Xenorhabdus nematophila (strain ATCC 19061 / DSM 3370 / CCUG 14189 / LMG 1036 / NCIMB 9965 / AN6)</name>
    <dbReference type="NCBI Taxonomy" id="406817"/>
    <lineage>
        <taxon>Bacteria</taxon>
        <taxon>Pseudomonadati</taxon>
        <taxon>Pseudomonadota</taxon>
        <taxon>Gammaproteobacteria</taxon>
        <taxon>Enterobacterales</taxon>
        <taxon>Morganellaceae</taxon>
        <taxon>Xenorhabdus</taxon>
    </lineage>
</organism>
<sequence>MEYFDIEEVSSKILHELLQYRRRFPESEHTIQYEENKVSEVQLPRIRAFVEQGKPIECILPAFPTKSPNPRKVLGKMPDMAEKLSLMFLNSLCQRIQLYYPPGAKIIICSDGHVFSDLIHVDDNTITDYQVEIEKLLHESGATHLSVFNLGNVESLTQYTDDYDQLRELLVKNYASSTEEIKAILKENEEGLLLYRAITRFLYEDSLLPEYTGSKNALQKDARQRSVGVIQRSWAWGNLLAEQFPQAIRLSIHPQSVESLKLGIHMMPTRDDWLTPWHGVAANINGQFVLMKSDEVKNLQGKLIHIRGVPSHYVIETESERNQEIEPIAEAVHAG</sequence>
<evidence type="ECO:0000269" key="1">
    <source>
    </source>
</evidence>
<evidence type="ECO:0000303" key="2">
    <source>
    </source>
</evidence>
<evidence type="ECO:0000303" key="3">
    <source>
    </source>
</evidence>
<evidence type="ECO:0000305" key="4"/>
<evidence type="ECO:0000305" key="5">
    <source>
    </source>
</evidence>
<evidence type="ECO:0000305" key="6">
    <source>
    </source>
</evidence>
<evidence type="ECO:0000312" key="7">
    <source>
        <dbReference type="EMBL" id="CBJ89292.1"/>
    </source>
</evidence>
<dbReference type="EC" id="4.1.99.24" evidence="5 6"/>
<dbReference type="EMBL" id="FN667742">
    <property type="protein sequence ID" value="CBJ89292.1"/>
    <property type="molecule type" value="Genomic_DNA"/>
</dbReference>
<dbReference type="RefSeq" id="WP_010845414.1">
    <property type="nucleotide sequence ID" value="NC_014228.1"/>
</dbReference>
<dbReference type="SMR" id="D3V9Q4"/>
<dbReference type="STRING" id="406817.XNC1_1221"/>
<dbReference type="GeneID" id="24903066"/>
<dbReference type="KEGG" id="xne:XNC1_1221"/>
<dbReference type="eggNOG" id="COG3207">
    <property type="taxonomic scope" value="Bacteria"/>
</dbReference>
<dbReference type="HOGENOM" id="CLU_038280_0_0_6"/>
<dbReference type="BioCyc" id="MetaCyc:MONOMER-20417"/>
<dbReference type="Proteomes" id="UP000008075">
    <property type="component" value="Chromosome"/>
</dbReference>
<dbReference type="GO" id="GO:0016829">
    <property type="term" value="F:lyase activity"/>
    <property type="evidence" value="ECO:0007669"/>
    <property type="project" value="UniProtKB-KW"/>
</dbReference>
<dbReference type="Gene3D" id="3.30.60.140">
    <property type="match status" value="1"/>
</dbReference>
<dbReference type="InterPro" id="IPR007817">
    <property type="entry name" value="Isocyanide_synthase_DIT1"/>
</dbReference>
<dbReference type="InterPro" id="IPR017133">
    <property type="entry name" value="PvcA"/>
</dbReference>
<dbReference type="InterPro" id="IPR054921">
    <property type="entry name" value="TyIsonSynPvcA"/>
</dbReference>
<dbReference type="NCBIfam" id="NF045653">
    <property type="entry name" value="TyIsonSynPvcA"/>
    <property type="match status" value="1"/>
</dbReference>
<dbReference type="PANTHER" id="PTHR37285">
    <property type="entry name" value="SPORE WALL MATURATION PROTEIN DIT1"/>
    <property type="match status" value="1"/>
</dbReference>
<dbReference type="PANTHER" id="PTHR37285:SF5">
    <property type="entry name" value="SPORE WALL MATURATION PROTEIN DIT1"/>
    <property type="match status" value="1"/>
</dbReference>
<dbReference type="Pfam" id="PF05141">
    <property type="entry name" value="DIT1_PvcA"/>
    <property type="match status" value="1"/>
</dbReference>
<dbReference type="PIRSF" id="PIRSF037196">
    <property type="entry name" value="Pyoverdine_chromoph_PvcA"/>
    <property type="match status" value="1"/>
</dbReference>